<feature type="chain" id="PRO_0000197999" description="Bis(5'-nucleosyl)-tetraphosphatase, symmetrical">
    <location>
        <begin position="1"/>
        <end position="276"/>
    </location>
</feature>
<comment type="function">
    <text evidence="1">Hydrolyzes diadenosine 5',5'''-P1,P4-tetraphosphate to yield ADP.</text>
</comment>
<comment type="catalytic activity">
    <reaction>
        <text>P(1),P(4)-bis(5'-adenosyl) tetraphosphate + H2O = 2 ADP + 2 H(+)</text>
        <dbReference type="Rhea" id="RHEA:24252"/>
        <dbReference type="ChEBI" id="CHEBI:15377"/>
        <dbReference type="ChEBI" id="CHEBI:15378"/>
        <dbReference type="ChEBI" id="CHEBI:58141"/>
        <dbReference type="ChEBI" id="CHEBI:456216"/>
        <dbReference type="EC" id="3.6.1.41"/>
    </reaction>
</comment>
<comment type="similarity">
    <text evidence="2">Belongs to the Ap4A hydrolase family.</text>
</comment>
<reference key="1">
    <citation type="journal article" date="2000" name="Nature">
        <title>Complete DNA sequence of a serogroup A strain of Neisseria meningitidis Z2491.</title>
        <authorList>
            <person name="Parkhill J."/>
            <person name="Achtman M."/>
            <person name="James K.D."/>
            <person name="Bentley S.D."/>
            <person name="Churcher C.M."/>
            <person name="Klee S.R."/>
            <person name="Morelli G."/>
            <person name="Basham D."/>
            <person name="Brown D."/>
            <person name="Chillingworth T."/>
            <person name="Davies R.M."/>
            <person name="Davis P."/>
            <person name="Devlin K."/>
            <person name="Feltwell T."/>
            <person name="Hamlin N."/>
            <person name="Holroyd S."/>
            <person name="Jagels K."/>
            <person name="Leather S."/>
            <person name="Moule S."/>
            <person name="Mungall K.L."/>
            <person name="Quail M.A."/>
            <person name="Rajandream M.A."/>
            <person name="Rutherford K.M."/>
            <person name="Simmonds M."/>
            <person name="Skelton J."/>
            <person name="Whitehead S."/>
            <person name="Spratt B.G."/>
            <person name="Barrell B.G."/>
        </authorList>
    </citation>
    <scope>NUCLEOTIDE SEQUENCE [LARGE SCALE GENOMIC DNA]</scope>
    <source>
        <strain>DSM 15465 / Z2491</strain>
    </source>
</reference>
<organism>
    <name type="scientific">Neisseria meningitidis serogroup A / serotype 4A (strain DSM 15465 / Z2491)</name>
    <dbReference type="NCBI Taxonomy" id="122587"/>
    <lineage>
        <taxon>Bacteria</taxon>
        <taxon>Pseudomonadati</taxon>
        <taxon>Pseudomonadota</taxon>
        <taxon>Betaproteobacteria</taxon>
        <taxon>Neisseriales</taxon>
        <taxon>Neisseriaceae</taxon>
        <taxon>Neisseria</taxon>
    </lineage>
</organism>
<keyword id="KW-0378">Hydrolase</keyword>
<evidence type="ECO:0000250" key="1"/>
<evidence type="ECO:0000305" key="2"/>
<protein>
    <recommendedName>
        <fullName>Bis(5'-nucleosyl)-tetraphosphatase, symmetrical</fullName>
        <ecNumber>3.6.1.41</ecNumber>
    </recommendedName>
    <alternativeName>
        <fullName>Ap4A hydrolase</fullName>
    </alternativeName>
    <alternativeName>
        <fullName>Diadenosine 5',5'''-P1,P4-tetraphosphate pyrophosphohydrolase</fullName>
    </alternativeName>
    <alternativeName>
        <fullName>Diadenosine tetraphosphatase</fullName>
    </alternativeName>
</protein>
<gene>
    <name type="primary">apaH</name>
    <name type="ordered locus">NMA0860</name>
</gene>
<proteinExistence type="inferred from homology"/>
<sequence length="276" mass="31116">MAHYAIGDIQGCFDELTALLGKIGFNHGTDTLWLTGDIVNRGPKSLETLQFCIRHENSVQIVLGNHDLHLLAVGYGEGAPKRSDTIEPILKHPDGRKMLDWLRAQPLLIREGNRVMVHAGILPQWRITKAESLAGEAEAELRGKKYVKFFSKMYGNKPAAWDEGLEGYARLRFIVNAFTRMRALTFKNELDFDYKSTVKKMPLYLRPWFKAPDRQNLDHTIIFGHWSSLGYTNADNVISLDTGALWGGQLTAVNLETEEITQVQAAGGIDWKSFTK</sequence>
<dbReference type="EC" id="3.6.1.41"/>
<dbReference type="EMBL" id="AL157959">
    <property type="protein sequence ID" value="CAM08097.1"/>
    <property type="molecule type" value="Genomic_DNA"/>
</dbReference>
<dbReference type="PIR" id="H81931">
    <property type="entry name" value="H81931"/>
</dbReference>
<dbReference type="RefSeq" id="WP_002231975.1">
    <property type="nucleotide sequence ID" value="NC_003116.1"/>
</dbReference>
<dbReference type="SMR" id="Q9JVF4"/>
<dbReference type="EnsemblBacteria" id="CAM08097">
    <property type="protein sequence ID" value="CAM08097"/>
    <property type="gene ID" value="NMA0860"/>
</dbReference>
<dbReference type="KEGG" id="nma:NMA0860"/>
<dbReference type="HOGENOM" id="CLU_056184_2_0_4"/>
<dbReference type="Proteomes" id="UP000000626">
    <property type="component" value="Chromosome"/>
</dbReference>
<dbReference type="GO" id="GO:0008803">
    <property type="term" value="F:bis(5'-nucleosyl)-tetraphosphatase (symmetrical) activity"/>
    <property type="evidence" value="ECO:0007669"/>
    <property type="project" value="UniProtKB-UniRule"/>
</dbReference>
<dbReference type="CDD" id="cd07422">
    <property type="entry name" value="MPP_ApaH"/>
    <property type="match status" value="1"/>
</dbReference>
<dbReference type="Gene3D" id="3.60.21.10">
    <property type="match status" value="1"/>
</dbReference>
<dbReference type="HAMAP" id="MF_00199">
    <property type="entry name" value="ApaH"/>
    <property type="match status" value="1"/>
</dbReference>
<dbReference type="InterPro" id="IPR004617">
    <property type="entry name" value="ApaH"/>
</dbReference>
<dbReference type="InterPro" id="IPR004843">
    <property type="entry name" value="Calcineurin-like_PHP_ApaH"/>
</dbReference>
<dbReference type="InterPro" id="IPR029052">
    <property type="entry name" value="Metallo-depent_PP-like"/>
</dbReference>
<dbReference type="NCBIfam" id="TIGR00668">
    <property type="entry name" value="apaH"/>
    <property type="match status" value="1"/>
</dbReference>
<dbReference type="NCBIfam" id="NF001204">
    <property type="entry name" value="PRK00166.1"/>
    <property type="match status" value="1"/>
</dbReference>
<dbReference type="PANTHER" id="PTHR40942">
    <property type="match status" value="1"/>
</dbReference>
<dbReference type="PANTHER" id="PTHR40942:SF4">
    <property type="entry name" value="CYTOCHROME C5"/>
    <property type="match status" value="1"/>
</dbReference>
<dbReference type="Pfam" id="PF00149">
    <property type="entry name" value="Metallophos"/>
    <property type="match status" value="1"/>
</dbReference>
<dbReference type="PIRSF" id="PIRSF000903">
    <property type="entry name" value="B5n-ttraPtase_sm"/>
    <property type="match status" value="1"/>
</dbReference>
<dbReference type="SUPFAM" id="SSF56300">
    <property type="entry name" value="Metallo-dependent phosphatases"/>
    <property type="match status" value="1"/>
</dbReference>
<name>APAH_NEIMA</name>
<accession>Q9JVF4</accession>
<accession>A1IQR3</accession>